<feature type="chain" id="PRO_0000273359" description="N-acetylneuraminate lyase A">
    <location>
        <begin position="1"/>
        <end position="305"/>
    </location>
</feature>
<feature type="active site" description="Proton donor" evidence="2">
    <location>
        <position position="143"/>
    </location>
</feature>
<feature type="active site" description="Schiff-base intermediate with substrate" evidence="2">
    <location>
        <position position="173"/>
    </location>
</feature>
<feature type="binding site" evidence="2">
    <location>
        <position position="51"/>
    </location>
    <ligand>
        <name>aceneuramate</name>
        <dbReference type="ChEBI" id="CHEBI:173083"/>
    </ligand>
</feature>
<feature type="binding site" evidence="2">
    <location>
        <position position="52"/>
    </location>
    <ligand>
        <name>aceneuramate</name>
        <dbReference type="ChEBI" id="CHEBI:173083"/>
    </ligand>
</feature>
<feature type="binding site" evidence="2">
    <location>
        <position position="175"/>
    </location>
    <ligand>
        <name>aceneuramate</name>
        <dbReference type="ChEBI" id="CHEBI:173083"/>
    </ligand>
</feature>
<feature type="binding site" evidence="2">
    <location>
        <position position="197"/>
    </location>
    <ligand>
        <name>aceneuramate</name>
        <dbReference type="ChEBI" id="CHEBI:173083"/>
    </ligand>
</feature>
<feature type="binding site" evidence="2">
    <location>
        <position position="199"/>
    </location>
    <ligand>
        <name>aceneuramate</name>
        <dbReference type="ChEBI" id="CHEBI:173083"/>
    </ligand>
</feature>
<feature type="binding site" evidence="2">
    <location>
        <position position="200"/>
    </location>
    <ligand>
        <name>aceneuramate</name>
        <dbReference type="ChEBI" id="CHEBI:173083"/>
    </ligand>
</feature>
<feature type="binding site" evidence="2">
    <location>
        <position position="216"/>
    </location>
    <ligand>
        <name>aceneuramate</name>
        <dbReference type="ChEBI" id="CHEBI:173083"/>
    </ligand>
</feature>
<evidence type="ECO:0000250" key="1"/>
<evidence type="ECO:0000250" key="2">
    <source>
        <dbReference type="UniProtKB" id="P0A6L4"/>
    </source>
</evidence>
<evidence type="ECO:0000305" key="3"/>
<accession>Q3B8E8</accession>
<protein>
    <recommendedName>
        <fullName>N-acetylneuraminate lyase A</fullName>
        <shortName>NALase A</shortName>
        <ecNumber>4.1.3.3</ecNumber>
    </recommendedName>
    <alternativeName>
        <fullName>N-acetylneuraminate pyruvate-lyase A</fullName>
    </alternativeName>
    <alternativeName>
        <fullName>N-acetylneuraminic acid aldolase A</fullName>
    </alternativeName>
    <alternativeName>
        <fullName>Sialate lyase A</fullName>
    </alternativeName>
    <alternativeName>
        <fullName>Sialate-pyruvate lyase A</fullName>
    </alternativeName>
    <alternativeName>
        <fullName>Sialic acid aldolase A</fullName>
    </alternativeName>
    <alternativeName>
        <fullName>Sialic acid lyase A</fullName>
    </alternativeName>
</protein>
<organism>
    <name type="scientific">Xenopus laevis</name>
    <name type="common">African clawed frog</name>
    <dbReference type="NCBI Taxonomy" id="8355"/>
    <lineage>
        <taxon>Eukaryota</taxon>
        <taxon>Metazoa</taxon>
        <taxon>Chordata</taxon>
        <taxon>Craniata</taxon>
        <taxon>Vertebrata</taxon>
        <taxon>Euteleostomi</taxon>
        <taxon>Amphibia</taxon>
        <taxon>Batrachia</taxon>
        <taxon>Anura</taxon>
        <taxon>Pipoidea</taxon>
        <taxon>Pipidae</taxon>
        <taxon>Xenopodinae</taxon>
        <taxon>Xenopus</taxon>
        <taxon>Xenopus</taxon>
    </lineage>
</organism>
<proteinExistence type="evidence at transcript level"/>
<dbReference type="EC" id="4.1.3.3"/>
<dbReference type="EMBL" id="BC106506">
    <property type="protein sequence ID" value="AAI06507.1"/>
    <property type="molecule type" value="mRNA"/>
</dbReference>
<dbReference type="RefSeq" id="NP_001089763.1">
    <property type="nucleotide sequence ID" value="NM_001096294.1"/>
</dbReference>
<dbReference type="SMR" id="Q3B8E8"/>
<dbReference type="DNASU" id="734827"/>
<dbReference type="GeneID" id="734827"/>
<dbReference type="KEGG" id="xla:734827"/>
<dbReference type="AGR" id="Xenbase:XB-GENE-978369"/>
<dbReference type="CTD" id="734827"/>
<dbReference type="Xenbase" id="XB-GENE-978369">
    <property type="gene designation" value="npl.L"/>
</dbReference>
<dbReference type="OrthoDB" id="191315at2759"/>
<dbReference type="UniPathway" id="UPA00629"/>
<dbReference type="Proteomes" id="UP000186698">
    <property type="component" value="Chromosome 4L"/>
</dbReference>
<dbReference type="Bgee" id="734827">
    <property type="expression patterns" value="Expressed in spleen and 19 other cell types or tissues"/>
</dbReference>
<dbReference type="GO" id="GO:0005737">
    <property type="term" value="C:cytoplasm"/>
    <property type="evidence" value="ECO:0007669"/>
    <property type="project" value="UniProtKB-SubCell"/>
</dbReference>
<dbReference type="GO" id="GO:0008747">
    <property type="term" value="F:N-acetylneuraminate lyase activity"/>
    <property type="evidence" value="ECO:0000250"/>
    <property type="project" value="UniProtKB"/>
</dbReference>
<dbReference type="GO" id="GO:0019262">
    <property type="term" value="P:N-acetylneuraminate catabolic process"/>
    <property type="evidence" value="ECO:0000318"/>
    <property type="project" value="GO_Central"/>
</dbReference>
<dbReference type="FunFam" id="3.20.20.70:FF:000133">
    <property type="entry name" value="N-acetylneuraminate pyruvate lyase"/>
    <property type="match status" value="1"/>
</dbReference>
<dbReference type="Gene3D" id="3.20.20.70">
    <property type="entry name" value="Aldolase class I"/>
    <property type="match status" value="1"/>
</dbReference>
<dbReference type="InterPro" id="IPR013785">
    <property type="entry name" value="Aldolase_TIM"/>
</dbReference>
<dbReference type="InterPro" id="IPR002220">
    <property type="entry name" value="DapA-like"/>
</dbReference>
<dbReference type="PANTHER" id="PTHR12128">
    <property type="entry name" value="DIHYDRODIPICOLINATE SYNTHASE"/>
    <property type="match status" value="1"/>
</dbReference>
<dbReference type="PANTHER" id="PTHR12128:SF21">
    <property type="entry name" value="N-ACETYLNEURAMINATE LYASE"/>
    <property type="match status" value="1"/>
</dbReference>
<dbReference type="Pfam" id="PF00701">
    <property type="entry name" value="DHDPS"/>
    <property type="match status" value="1"/>
</dbReference>
<dbReference type="PIRSF" id="PIRSF001365">
    <property type="entry name" value="DHDPS"/>
    <property type="match status" value="1"/>
</dbReference>
<dbReference type="PRINTS" id="PR00146">
    <property type="entry name" value="DHPICSNTHASE"/>
</dbReference>
<dbReference type="SMART" id="SM01130">
    <property type="entry name" value="DHDPS"/>
    <property type="match status" value="1"/>
</dbReference>
<dbReference type="SUPFAM" id="SSF51569">
    <property type="entry name" value="Aldolase"/>
    <property type="match status" value="1"/>
</dbReference>
<reference key="1">
    <citation type="submission" date="2005-10" db="EMBL/GenBank/DDBJ databases">
        <authorList>
            <consortium name="NIH - Xenopus Gene Collection (XGC) project"/>
        </authorList>
    </citation>
    <scope>NUCLEOTIDE SEQUENCE [LARGE SCALE MRNA]</scope>
    <source>
        <tissue>Testis</tissue>
    </source>
</reference>
<gene>
    <name type="primary">npl-a</name>
</gene>
<comment type="function">
    <text evidence="1">Catalyzes the cleavage of N-acetylneuraminic acid (sialic acid) to form pyruvate and N-acetylmannosamine via a Schiff base intermediate. It prevents sialic acids from being recycled and returning to the cell surface. Involved in the N-glycolylneuraminic acid (Neu5Gc) degradation pathway (By similarity).</text>
</comment>
<comment type="catalytic activity">
    <reaction>
        <text>aceneuramate = aldehydo-N-acetyl-D-mannosamine + pyruvate</text>
        <dbReference type="Rhea" id="RHEA:23296"/>
        <dbReference type="ChEBI" id="CHEBI:15361"/>
        <dbReference type="ChEBI" id="CHEBI:17122"/>
        <dbReference type="ChEBI" id="CHEBI:173083"/>
        <dbReference type="EC" id="4.1.3.3"/>
    </reaction>
</comment>
<comment type="pathway">
    <text>Amino-sugar metabolism; N-acetylneuraminate degradation.</text>
</comment>
<comment type="subunit">
    <text evidence="1">Homotetramer.</text>
</comment>
<comment type="subcellular location">
    <subcellularLocation>
        <location evidence="1">Cytoplasm</location>
    </subcellularLocation>
</comment>
<comment type="similarity">
    <text evidence="3">Belongs to the DapA family. NanA subfamily.</text>
</comment>
<keyword id="KW-0119">Carbohydrate metabolism</keyword>
<keyword id="KW-0963">Cytoplasm</keyword>
<keyword id="KW-0456">Lyase</keyword>
<keyword id="KW-1185">Reference proteome</keyword>
<keyword id="KW-0704">Schiff base</keyword>
<sequence length="305" mass="33725">MAFAGKRLKGLIAATFTPMTSNSDINLAAIEQYVDYLVQKQHIRNIFVNGTTGEGMSLSVHERKSLAEEWVKQARGKMNDVIVHVGCLSLSDSKDLAAHAASCGADAISTVCPSFLKPSSLDALVLYLKEVASAAPNLPFYYYHIPRLTGITYQIYELLGKVKKNIPSFRGVKFSDVNLMDFSLCVSEYKEFDCLYGVDEQLLGALAFGAHGAVGSTYNYLGKKNGDMMAAFEEGNLQKARKIQCSLQEFLIFVFDMGWGLAEFKDIMSQVSGIPLGPSRLPLYSSMKFDHHDNIKTKMLKLDLI</sequence>
<name>NPLA_XENLA</name>